<protein>
    <recommendedName>
        <fullName evidence="1">Regulator of RpoS</fullName>
    </recommendedName>
</protein>
<feature type="chain" id="PRO_0000081388" description="Regulator of RpoS">
    <location>
        <begin position="1"/>
        <end position="337"/>
    </location>
</feature>
<feature type="domain" description="Response regulatory" evidence="2">
    <location>
        <begin position="9"/>
        <end position="123"/>
    </location>
</feature>
<feature type="modified residue" description="4-aspartylphosphate" evidence="1 14">
    <location>
        <position position="58"/>
    </location>
</feature>
<feature type="mutagenesis site" description="Lack of phosphorylation. Cannot bind RpoS." evidence="6 11 14">
    <original>D</original>
    <variation>P</variation>
    <variation>Q</variation>
    <variation>R</variation>
    <location>
        <position position="58"/>
    </location>
</feature>
<feature type="mutagenesis site" description="Lack of phosphorylation." evidence="11">
    <original>L</original>
    <variation>A</variation>
    <location>
        <position position="67"/>
    </location>
</feature>
<feature type="mutagenesis site" description="Resistant to IraP but not to IraD. Increases stabilization by IraM. Decreases phosphorylation." evidence="11">
    <original>P</original>
    <variation>S</variation>
    <location>
        <position position="109"/>
    </location>
</feature>
<feature type="mutagenesis site" description="Resistant to both IraP and IraD. Increases stabilization by IraM." evidence="11">
    <original>W</original>
    <variation>R</variation>
    <location>
        <position position="143"/>
    </location>
</feature>
<feature type="mutagenesis site" description="Resistant to IraP and IraD." evidence="11">
    <original>L</original>
    <variation>H</variation>
    <location>
        <position position="214"/>
    </location>
</feature>
<feature type="mutagenesis site" description="Resistant to IraP, IraD and IraM." evidence="11">
    <original>A</original>
    <variation>T</variation>
    <location>
        <position position="216"/>
    </location>
</feature>
<feature type="mutagenesis site" description="Resistant to IraP, IraD and IraM." evidence="11">
    <original>L</original>
    <variation>V</variation>
    <location>
        <position position="218"/>
    </location>
</feature>
<feature type="mutagenesis site" description="Resistant to IraM." evidence="11">
    <original>A</original>
    <variation>V</variation>
    <location>
        <position position="255"/>
    </location>
</feature>
<feature type="turn" evidence="15">
    <location>
        <begin position="4"/>
        <end position="7"/>
    </location>
</feature>
<feature type="strand" evidence="15">
    <location>
        <begin position="9"/>
        <end position="13"/>
    </location>
</feature>
<feature type="helix" evidence="15">
    <location>
        <begin position="17"/>
        <end position="29"/>
    </location>
</feature>
<feature type="strand" evidence="15">
    <location>
        <begin position="33"/>
        <end position="38"/>
    </location>
</feature>
<feature type="helix" evidence="15">
    <location>
        <begin position="40"/>
        <end position="47"/>
    </location>
</feature>
<feature type="strand" evidence="15">
    <location>
        <begin position="53"/>
        <end position="57"/>
    </location>
</feature>
<feature type="strand" evidence="17">
    <location>
        <begin position="62"/>
        <end position="64"/>
    </location>
</feature>
<feature type="helix" evidence="15">
    <location>
        <begin position="67"/>
        <end position="75"/>
    </location>
</feature>
<feature type="strand" evidence="15">
    <location>
        <begin position="82"/>
        <end position="86"/>
    </location>
</feature>
<feature type="helix" evidence="15">
    <location>
        <begin position="91"/>
        <end position="100"/>
    </location>
</feature>
<feature type="strand" evidence="15">
    <location>
        <begin position="103"/>
        <end position="108"/>
    </location>
</feature>
<feature type="helix" evidence="15">
    <location>
        <begin position="115"/>
        <end position="124"/>
    </location>
</feature>
<feature type="helix" evidence="18">
    <location>
        <begin position="128"/>
        <end position="130"/>
    </location>
</feature>
<feature type="helix" evidence="16">
    <location>
        <begin position="132"/>
        <end position="141"/>
    </location>
</feature>
<feature type="helix" evidence="16">
    <location>
        <begin position="143"/>
        <end position="148"/>
    </location>
</feature>
<feature type="helix" evidence="16">
    <location>
        <begin position="150"/>
        <end position="159"/>
    </location>
</feature>
<feature type="strand" evidence="16">
    <location>
        <begin position="164"/>
        <end position="168"/>
    </location>
</feature>
<feature type="strand" evidence="16">
    <location>
        <begin position="171"/>
        <end position="179"/>
    </location>
</feature>
<feature type="strand" evidence="16">
    <location>
        <begin position="185"/>
        <end position="204"/>
    </location>
</feature>
<feature type="turn" evidence="18">
    <location>
        <begin position="205"/>
        <end position="209"/>
    </location>
</feature>
<feature type="helix" evidence="16">
    <location>
        <begin position="210"/>
        <end position="233"/>
    </location>
</feature>
<feature type="helix" evidence="16">
    <location>
        <begin position="241"/>
        <end position="254"/>
    </location>
</feature>
<feature type="strand" evidence="16">
    <location>
        <begin position="263"/>
        <end position="269"/>
    </location>
</feature>
<feature type="turn" evidence="16">
    <location>
        <begin position="270"/>
        <end position="273"/>
    </location>
</feature>
<feature type="strand" evidence="16">
    <location>
        <begin position="274"/>
        <end position="281"/>
    </location>
</feature>
<feature type="strand" evidence="16">
    <location>
        <begin position="283"/>
        <end position="287"/>
    </location>
</feature>
<feature type="strand" evidence="16">
    <location>
        <begin position="292"/>
        <end position="296"/>
    </location>
</feature>
<feature type="strand" evidence="16">
    <location>
        <begin position="303"/>
        <end position="305"/>
    </location>
</feature>
<feature type="strand" evidence="16">
    <location>
        <begin position="312"/>
        <end position="315"/>
    </location>
</feature>
<feature type="strand" evidence="16">
    <location>
        <begin position="319"/>
        <end position="325"/>
    </location>
</feature>
<feature type="strand" evidence="16">
    <location>
        <begin position="328"/>
        <end position="336"/>
    </location>
</feature>
<proteinExistence type="evidence at protein level"/>
<name>RSSB_ECOLI</name>
<sequence>MTQPLVGKQILIVEDEQVFRSLLDSWFSSLGATTVLAADGVDALELLGGFTPDLMICDIAMPRMNGLKLLEHIRNRGDQTPVLVISATENMADIAKALRLGVEDVLLKPVKDLNRLREMVFACLYPSMFNSRVEEEERLFRDWDAMVDNPAAAAKLLQELQPPVQQVISHCRVNYRQLVAADKPGLVLDIAALSENDLAFYCLDVTRAGHNGVLAALLLRALFNGLLQEQLAHQNQRLPELGALLKQVNHLLRQANLPGQFPLLVGYYHRELKNLILVSAGLNATLNTGEHQVQISNGVPLGTLGNAYLNQLSQRCDAWQCQIWGTGGRLRLMLSAE</sequence>
<accession>P0AEV1</accession>
<accession>P37055</accession>
<keyword id="KW-0002">3D-structure</keyword>
<keyword id="KW-0597">Phosphoprotein</keyword>
<keyword id="KW-1185">Reference proteome</keyword>
<keyword id="KW-0346">Stress response</keyword>
<reference key="1">
    <citation type="submission" date="1992-04" db="EMBL/GenBank/DDBJ databases">
        <authorList>
            <person name="Contreras A."/>
        </authorList>
    </citation>
    <scope>NUCLEOTIDE SEQUENCE [GENOMIC DNA]</scope>
    <source>
        <strain>K12</strain>
    </source>
</reference>
<reference key="2">
    <citation type="journal article" date="1994" name="J. Bacteriol.">
        <title>Organization and functions of genes in the upstream region of tyrT of Escherichia coli: phenotypes of mutants with partial deletion of a new gene (tgs).</title>
        <authorList>
            <person name="Boesl M."/>
            <person name="Kersten H."/>
        </authorList>
    </citation>
    <scope>NUCLEOTIDE SEQUENCE [GENOMIC DNA]</scope>
    <source>
        <strain>K12</strain>
    </source>
</reference>
<reference key="3">
    <citation type="journal article" date="1996" name="DNA Res.">
        <title>A 718-kb DNA sequence of the Escherichia coli K-12 genome corresponding to the 12.7-28.0 min region on the linkage map.</title>
        <authorList>
            <person name="Oshima T."/>
            <person name="Aiba H."/>
            <person name="Baba T."/>
            <person name="Fujita K."/>
            <person name="Hayashi K."/>
            <person name="Honjo A."/>
            <person name="Ikemoto K."/>
            <person name="Inada T."/>
            <person name="Itoh T."/>
            <person name="Kajihara M."/>
            <person name="Kanai K."/>
            <person name="Kashimoto K."/>
            <person name="Kimura S."/>
            <person name="Kitagawa M."/>
            <person name="Makino K."/>
            <person name="Masuda S."/>
            <person name="Miki T."/>
            <person name="Mizobuchi K."/>
            <person name="Mori H."/>
            <person name="Motomura K."/>
            <person name="Nakamura Y."/>
            <person name="Nashimoto H."/>
            <person name="Nishio Y."/>
            <person name="Saito N."/>
            <person name="Sampei G."/>
            <person name="Seki Y."/>
            <person name="Tagami H."/>
            <person name="Takemoto K."/>
            <person name="Wada C."/>
            <person name="Yamamoto Y."/>
            <person name="Yano M."/>
            <person name="Horiuchi T."/>
        </authorList>
    </citation>
    <scope>NUCLEOTIDE SEQUENCE [LARGE SCALE GENOMIC DNA]</scope>
    <source>
        <strain>K12 / W3110 / ATCC 27325 / DSM 5911</strain>
    </source>
</reference>
<reference key="4">
    <citation type="journal article" date="1997" name="Science">
        <title>The complete genome sequence of Escherichia coli K-12.</title>
        <authorList>
            <person name="Blattner F.R."/>
            <person name="Plunkett G. III"/>
            <person name="Bloch C.A."/>
            <person name="Perna N.T."/>
            <person name="Burland V."/>
            <person name="Riley M."/>
            <person name="Collado-Vides J."/>
            <person name="Glasner J.D."/>
            <person name="Rode C.K."/>
            <person name="Mayhew G.F."/>
            <person name="Gregor J."/>
            <person name="Davis N.W."/>
            <person name="Kirkpatrick H.A."/>
            <person name="Goeden M.A."/>
            <person name="Rose D.J."/>
            <person name="Mau B."/>
            <person name="Shao Y."/>
        </authorList>
    </citation>
    <scope>NUCLEOTIDE SEQUENCE [LARGE SCALE GENOMIC DNA]</scope>
    <source>
        <strain>K12 / MG1655 / ATCC 47076</strain>
    </source>
</reference>
<reference key="5">
    <citation type="journal article" date="2006" name="Mol. Syst. Biol.">
        <title>Highly accurate genome sequences of Escherichia coli K-12 strains MG1655 and W3110.</title>
        <authorList>
            <person name="Hayashi K."/>
            <person name="Morooka N."/>
            <person name="Yamamoto Y."/>
            <person name="Fujita K."/>
            <person name="Isono K."/>
            <person name="Choi S."/>
            <person name="Ohtsubo E."/>
            <person name="Baba T."/>
            <person name="Wanner B.L."/>
            <person name="Mori H."/>
            <person name="Horiuchi T."/>
        </authorList>
    </citation>
    <scope>NUCLEOTIDE SEQUENCE [LARGE SCALE GENOMIC DNA]</scope>
    <source>
        <strain>K12 / W3110 / ATCC 27325 / DSM 5911</strain>
    </source>
</reference>
<reference key="6">
    <citation type="journal article" date="1996" name="EMBO J.">
        <title>The response regulator RssB controls stability of the sigma(S) subunit of RNA polymerase in Escherichia coli.</title>
        <authorList>
            <person name="Muffler A."/>
            <person name="Fischer D."/>
            <person name="Altuvia S."/>
            <person name="Storz G."/>
            <person name="Hengge-Aronis R."/>
        </authorList>
    </citation>
    <scope>FUNCTION</scope>
    <scope>DISRUPTION PHENOTYPE</scope>
    <scope>GENE NAME</scope>
    <source>
        <strain>K12 / MC4100 / ATCC 35695 / DSM 6574</strain>
    </source>
</reference>
<reference key="7">
    <citation type="journal article" date="1996" name="Proc. Natl. Acad. Sci. U.S.A.">
        <title>The response regulator SprE controls the stability of RpoS.</title>
        <authorList>
            <person name="Pratt L.A."/>
            <person name="Silhavy T.J."/>
        </authorList>
    </citation>
    <scope>FUNCTION</scope>
    <source>
        <strain>K12 / MC4100 / ATCC 35695 / DSM 6574</strain>
    </source>
</reference>
<reference key="8">
    <citation type="journal article" date="1998" name="Mol. Microbiol.">
        <title>Regulation of RssB-dependent proteolysis in Escherichia coli: a role for acetyl phosphate in a response regulator-controlled process.</title>
        <authorList>
            <person name="Bouche S."/>
            <person name="Klauck E."/>
            <person name="Fischer D."/>
            <person name="Lucassen M."/>
            <person name="Jung K."/>
            <person name="Hengge-Aronis R."/>
        </authorList>
    </citation>
    <scope>PHOSPHORYLATION AT ASP-58</scope>
    <scope>MUTAGENESIS OF ASP-58</scope>
    <source>
        <strain>K12 / MC4100 / ATCC 35695 / DSM 6574</strain>
    </source>
</reference>
<reference key="9">
    <citation type="journal article" date="1999" name="Proc. Natl. Acad. Sci. U.S.A.">
        <title>Regulation of RpoS proteolysis in Escherichia coli: the response regulator RssB is a recognition factor that interacts with the turnover element in RpoS.</title>
        <authorList>
            <person name="Becker G."/>
            <person name="Klauck E."/>
            <person name="Hengge-Aronis R."/>
        </authorList>
    </citation>
    <scope>INTERACTION WITH RPOS</scope>
    <scope>PHOSPHORYLATION</scope>
    <source>
        <strain>K12 / MC4100 / ATCC 35695 / DSM 6574</strain>
    </source>
</reference>
<reference key="10">
    <citation type="journal article" date="2000" name="J. Bacteriol.">
        <title>SprE levels are growth phase regulated in a sigma(S)-dependent manner at the level of translation.</title>
        <authorList>
            <person name="Gibson K.E."/>
            <person name="Silhavy T.J."/>
        </authorList>
    </citation>
    <scope>INDUCTION</scope>
    <source>
        <strain>K12 / MC4100 / ATCC 35695 / DSM 6574</strain>
    </source>
</reference>
<reference key="11">
    <citation type="journal article" date="2000" name="Mol. Microbiol.">
        <title>The response regulator RssB, a recognition factor for sigmaS proteolysis in Escherichia coli, can act like an anti-sigmaS factor.</title>
        <authorList>
            <person name="Becker G."/>
            <person name="Klauck E."/>
            <person name="Hengge-Aronis R."/>
        </authorList>
    </citation>
    <scope>FUNCTION AS AN ANTI-SIGMA FACTOR</scope>
    <scope>INTERACTION WITH RPOS</scope>
    <source>
        <strain>K12 / MC4100 / ATCC 35695 / DSM 6574</strain>
    </source>
</reference>
<reference key="12">
    <citation type="journal article" date="2001" name="Mol. Microbiol.">
        <title>Role of the response regulator RssB in sigma recognition and initiation of sigma proteolysis in Escherichia coli.</title>
        <authorList>
            <person name="Klauck E."/>
            <person name="Lingnau M."/>
            <person name="Hengge-Aronis R."/>
        </authorList>
    </citation>
    <scope>FUNCTION</scope>
    <scope>INTERACTION WITH RPOS</scope>
    <scope>DOMAIN</scope>
    <scope>PHOSPHORYLATION</scope>
    <scope>MUTAGENESIS OF ASP-58</scope>
    <source>
        <strain>K12 / MC4100 / ATCC 35695 / DSM 6574</strain>
    </source>
</reference>
<reference key="13">
    <citation type="journal article" date="2006" name="Genes Dev.">
        <title>Modulating RssB activity: IraP, a novel regulator of sigma(S) stability in Escherichia coli.</title>
        <authorList>
            <person name="Bougdour A."/>
            <person name="Wickner S."/>
            <person name="Gottesman S."/>
        </authorList>
    </citation>
    <scope>ACTIVITY REGULATION</scope>
    <scope>INTERACTION WITH IRAP</scope>
    <source>
        <strain>K12 / MG1655 / ATCC 47076</strain>
    </source>
</reference>
<reference key="14">
    <citation type="journal article" date="2008" name="Mol. Microbiol.">
        <title>Multiple pathways for regulation of sigmaS (RpoS) stability in Escherichia coli via the action of multiple anti-adaptors.</title>
        <authorList>
            <person name="Bougdour A."/>
            <person name="Cunning C."/>
            <person name="Baptiste P.J."/>
            <person name="Elliott T."/>
            <person name="Gottesman S."/>
        </authorList>
    </citation>
    <scope>ACTIVITY REGULATION</scope>
    <scope>INTERACTION WITH IRAD AND IRAM</scope>
    <source>
        <strain>K12 / MG1655 / ATCC 47076</strain>
    </source>
</reference>
<reference key="15">
    <citation type="journal article" date="2009" name="J. Bacteriol.">
        <title>The response regulator SprE (RssB) modulates polyadenylation and mRNA stability in Escherichia coli.</title>
        <authorList>
            <person name="Carabetta V.J."/>
            <person name="Mohanty B.K."/>
            <person name="Kushner S.R."/>
            <person name="Silhavy T.J."/>
        </authorList>
    </citation>
    <scope>FUNCTION IN POLYADENYLATION</scope>
    <scope>DISRUPTION PHENOTYPE</scope>
    <source>
        <strain>K12 / MC4100 / ATCC 35695 / DSM 6574</strain>
    </source>
</reference>
<reference key="16">
    <citation type="journal article" date="2010" name="J. Bacteriol.">
        <title>The response regulator SprE (RssB) is required for maintaining poly(A) polymerase I-degradosome association during stationary phase.</title>
        <authorList>
            <person name="Carabetta V.J."/>
            <person name="Silhavy T.J."/>
            <person name="Cristea I.M."/>
        </authorList>
    </citation>
    <scope>FUNCTION IN POLYADENYLATION</scope>
    <source>
        <strain>K12 / MC4100 / ATCC 35695 / DSM 6574</strain>
    </source>
</reference>
<reference key="17">
    <citation type="journal article" date="2013" name="Genes Dev.">
        <title>Anti-adaptors provide multiple modes for regulation of the RssB adaptor protein.</title>
        <authorList>
            <person name="Battesti A."/>
            <person name="Hoskins J.R."/>
            <person name="Tong S."/>
            <person name="Milanesio P."/>
            <person name="Mann J.M."/>
            <person name="Kravats A."/>
            <person name="Tsegaye Y.M."/>
            <person name="Bougdour A."/>
            <person name="Wickner S."/>
            <person name="Gottesman S."/>
        </authorList>
    </citation>
    <scope>ACTIVITY REGULATION</scope>
    <scope>INTERACTION WITH IRAP; IRAD AND IRAM</scope>
    <scope>DOMAIN</scope>
    <scope>PHOSPHORYLATION</scope>
    <scope>MUTAGENESIS OF ASP-58; LEU-67; PRO-109; TRP-143; LEU-214; ALA-216; LEU-218 AND ALA-255</scope>
</reference>
<reference key="18">
    <citation type="submission" date="2008-09" db="PDB data bank">
        <title>The structure of RssB, a ClpX adaptor protein that regulates sigma S.</title>
        <authorList>
            <person name="Levchenko I."/>
            <person name="Grant R.A."/>
            <person name="Sauer R.T."/>
            <person name="Baker T.A."/>
        </authorList>
    </citation>
    <scope>X-RAY CRYSTALLOGRAPHY (1.75 ANGSTROMS) OF 1-130</scope>
</reference>
<gene>
    <name evidence="1" type="primary">rssB</name>
    <name type="synonym">hnr</name>
    <name type="synonym">sprE</name>
    <name type="synonym">ychL</name>
    <name type="ordered locus">b1235</name>
    <name type="ordered locus">JW1223</name>
</gene>
<organism>
    <name type="scientific">Escherichia coli (strain K12)</name>
    <dbReference type="NCBI Taxonomy" id="83333"/>
    <lineage>
        <taxon>Bacteria</taxon>
        <taxon>Pseudomonadati</taxon>
        <taxon>Pseudomonadota</taxon>
        <taxon>Gammaproteobacteria</taxon>
        <taxon>Enterobacterales</taxon>
        <taxon>Enterobacteriaceae</taxon>
        <taxon>Escherichia</taxon>
    </lineage>
</organism>
<evidence type="ECO:0000255" key="1">
    <source>
        <dbReference type="HAMAP-Rule" id="MF_00958"/>
    </source>
</evidence>
<evidence type="ECO:0000255" key="2">
    <source>
        <dbReference type="PROSITE-ProRule" id="PRU00169"/>
    </source>
</evidence>
<evidence type="ECO:0000269" key="3">
    <source>
    </source>
</evidence>
<evidence type="ECO:0000269" key="4">
    <source>
    </source>
</evidence>
<evidence type="ECO:0000269" key="5">
    <source>
    </source>
</evidence>
<evidence type="ECO:0000269" key="6">
    <source>
    </source>
</evidence>
<evidence type="ECO:0000269" key="7">
    <source>
    </source>
</evidence>
<evidence type="ECO:0000269" key="8">
    <source>
    </source>
</evidence>
<evidence type="ECO:0000269" key="9">
    <source>
    </source>
</evidence>
<evidence type="ECO:0000269" key="10">
    <source>
    </source>
</evidence>
<evidence type="ECO:0000269" key="11">
    <source>
    </source>
</evidence>
<evidence type="ECO:0000269" key="12">
    <source>
    </source>
</evidence>
<evidence type="ECO:0000269" key="13">
    <source>
    </source>
</evidence>
<evidence type="ECO:0000269" key="14">
    <source>
    </source>
</evidence>
<evidence type="ECO:0007829" key="15">
    <source>
        <dbReference type="PDB" id="3EOD"/>
    </source>
</evidence>
<evidence type="ECO:0007829" key="16">
    <source>
        <dbReference type="PDB" id="6Z4E"/>
    </source>
</evidence>
<evidence type="ECO:0007829" key="17">
    <source>
        <dbReference type="PDB" id="7L9C"/>
    </source>
</evidence>
<evidence type="ECO:0007829" key="18">
    <source>
        <dbReference type="PDB" id="8TWD"/>
    </source>
</evidence>
<dbReference type="EMBL" id="X66003">
    <property type="protein sequence ID" value="CAA46802.1"/>
    <property type="molecule type" value="Genomic_DNA"/>
</dbReference>
<dbReference type="EMBL" id="M64675">
    <property type="status" value="NOT_ANNOTATED_CDS"/>
    <property type="molecule type" value="Unassigned_DNA"/>
</dbReference>
<dbReference type="EMBL" id="U00096">
    <property type="protein sequence ID" value="AAC74317.1"/>
    <property type="molecule type" value="Genomic_DNA"/>
</dbReference>
<dbReference type="EMBL" id="AP009048">
    <property type="protein sequence ID" value="BAA36103.1"/>
    <property type="molecule type" value="Genomic_DNA"/>
</dbReference>
<dbReference type="PIR" id="A36871">
    <property type="entry name" value="A36871"/>
</dbReference>
<dbReference type="RefSeq" id="NP_415751.1">
    <property type="nucleotide sequence ID" value="NC_000913.3"/>
</dbReference>
<dbReference type="RefSeq" id="WP_000193447.1">
    <property type="nucleotide sequence ID" value="NZ_STEB01000005.1"/>
</dbReference>
<dbReference type="PDB" id="3EOD">
    <property type="method" value="X-ray"/>
    <property type="resolution" value="1.75 A"/>
    <property type="chains" value="A=1-130"/>
</dbReference>
<dbReference type="PDB" id="6Z4C">
    <property type="method" value="X-ray"/>
    <property type="resolution" value="2.00 A"/>
    <property type="chains" value="A/B=1-337"/>
</dbReference>
<dbReference type="PDB" id="6Z4E">
    <property type="method" value="X-ray"/>
    <property type="resolution" value="2.00 A"/>
    <property type="chains" value="A=1-337"/>
</dbReference>
<dbReference type="PDB" id="7L9C">
    <property type="method" value="X-ray"/>
    <property type="resolution" value="1.85 A"/>
    <property type="chains" value="A=1-129"/>
</dbReference>
<dbReference type="PDB" id="7LCM">
    <property type="method" value="X-ray"/>
    <property type="resolution" value="1.91 A"/>
    <property type="chains" value="A=1-129"/>
</dbReference>
<dbReference type="PDB" id="8T85">
    <property type="method" value="X-ray"/>
    <property type="resolution" value="2.38 A"/>
    <property type="chains" value="A=1-337"/>
</dbReference>
<dbReference type="PDB" id="8TWD">
    <property type="method" value="X-ray"/>
    <property type="resolution" value="3.30 A"/>
    <property type="chains" value="C/D=1-337"/>
</dbReference>
<dbReference type="PDBsum" id="3EOD"/>
<dbReference type="PDBsum" id="6Z4C"/>
<dbReference type="PDBsum" id="6Z4E"/>
<dbReference type="PDBsum" id="7L9C"/>
<dbReference type="PDBsum" id="7LCM"/>
<dbReference type="PDBsum" id="8T85"/>
<dbReference type="PDBsum" id="8TWD"/>
<dbReference type="SMR" id="P0AEV1"/>
<dbReference type="BioGRID" id="4261926">
    <property type="interactions" value="4"/>
</dbReference>
<dbReference type="BioGRID" id="850222">
    <property type="interactions" value="1"/>
</dbReference>
<dbReference type="ComplexPortal" id="CPX-5024">
    <property type="entry name" value="rpoS-rssB sigma-antisigma complex"/>
</dbReference>
<dbReference type="FunCoup" id="P0AEV1">
    <property type="interactions" value="34"/>
</dbReference>
<dbReference type="IntAct" id="P0AEV1">
    <property type="interactions" value="5"/>
</dbReference>
<dbReference type="STRING" id="511145.b1235"/>
<dbReference type="jPOST" id="P0AEV1"/>
<dbReference type="PaxDb" id="511145-b1235"/>
<dbReference type="EnsemblBacteria" id="AAC74317">
    <property type="protein sequence ID" value="AAC74317"/>
    <property type="gene ID" value="b1235"/>
</dbReference>
<dbReference type="GeneID" id="93775301"/>
<dbReference type="GeneID" id="945855"/>
<dbReference type="KEGG" id="ecj:JW1223"/>
<dbReference type="KEGG" id="eco:b1235"/>
<dbReference type="KEGG" id="ecoc:C3026_07265"/>
<dbReference type="PATRIC" id="fig|1411691.4.peg.1050"/>
<dbReference type="EchoBASE" id="EB2042"/>
<dbReference type="eggNOG" id="COG0745">
    <property type="taxonomic scope" value="Bacteria"/>
</dbReference>
<dbReference type="HOGENOM" id="CLU_055989_1_0_6"/>
<dbReference type="InParanoid" id="P0AEV1"/>
<dbReference type="OMA" id="ICDWIMP"/>
<dbReference type="OrthoDB" id="6399952at2"/>
<dbReference type="PhylomeDB" id="P0AEV1"/>
<dbReference type="BioCyc" id="EcoCyc:EG12121-MONOMER"/>
<dbReference type="EvolutionaryTrace" id="P0AEV1"/>
<dbReference type="PRO" id="PR:P0AEV1"/>
<dbReference type="Proteomes" id="UP000000625">
    <property type="component" value="Chromosome"/>
</dbReference>
<dbReference type="GO" id="GO:0005829">
    <property type="term" value="C:cytosol"/>
    <property type="evidence" value="ECO:0000318"/>
    <property type="project" value="GO_Central"/>
</dbReference>
<dbReference type="GO" id="GO:0032993">
    <property type="term" value="C:protein-DNA complex"/>
    <property type="evidence" value="ECO:0000318"/>
    <property type="project" value="GO_Central"/>
</dbReference>
<dbReference type="GO" id="GO:1903865">
    <property type="term" value="C:sigma factor antagonist complex"/>
    <property type="evidence" value="ECO:0000353"/>
    <property type="project" value="ComplexPortal"/>
</dbReference>
<dbReference type="GO" id="GO:0000156">
    <property type="term" value="F:phosphorelay response regulator activity"/>
    <property type="evidence" value="ECO:0000318"/>
    <property type="project" value="GO_Central"/>
</dbReference>
<dbReference type="GO" id="GO:0016989">
    <property type="term" value="F:sigma factor antagonist activity"/>
    <property type="evidence" value="ECO:0000314"/>
    <property type="project" value="EcoCyc"/>
</dbReference>
<dbReference type="GO" id="GO:0000976">
    <property type="term" value="F:transcription cis-regulatory region binding"/>
    <property type="evidence" value="ECO:0000318"/>
    <property type="project" value="GO_Central"/>
</dbReference>
<dbReference type="GO" id="GO:0045892">
    <property type="term" value="P:negative regulation of DNA-templated transcription"/>
    <property type="evidence" value="ECO:0000303"/>
    <property type="project" value="ComplexPortal"/>
</dbReference>
<dbReference type="GO" id="GO:0045862">
    <property type="term" value="P:positive regulation of proteolysis"/>
    <property type="evidence" value="ECO:0000314"/>
    <property type="project" value="EcoCyc"/>
</dbReference>
<dbReference type="GO" id="GO:0031648">
    <property type="term" value="P:protein destabilization"/>
    <property type="evidence" value="ECO:0000315"/>
    <property type="project" value="EcoCyc"/>
</dbReference>
<dbReference type="GO" id="GO:0006355">
    <property type="term" value="P:regulation of DNA-templated transcription"/>
    <property type="evidence" value="ECO:0000318"/>
    <property type="project" value="GO_Central"/>
</dbReference>
<dbReference type="CDD" id="cd00156">
    <property type="entry name" value="REC"/>
    <property type="match status" value="1"/>
</dbReference>
<dbReference type="FunFam" id="3.40.50.2300:FF:000076">
    <property type="entry name" value="Regulator of RpoS"/>
    <property type="match status" value="1"/>
</dbReference>
<dbReference type="FunFam" id="3.60.40.10:FF:000012">
    <property type="entry name" value="Regulator of RpoS"/>
    <property type="match status" value="1"/>
</dbReference>
<dbReference type="Gene3D" id="3.40.50.2300">
    <property type="match status" value="1"/>
</dbReference>
<dbReference type="Gene3D" id="3.60.40.10">
    <property type="entry name" value="PPM-type phosphatase domain"/>
    <property type="match status" value="1"/>
</dbReference>
<dbReference type="HAMAP" id="MF_00958">
    <property type="entry name" value="RssB"/>
    <property type="match status" value="1"/>
</dbReference>
<dbReference type="InterPro" id="IPR050595">
    <property type="entry name" value="Bact_response_regulator"/>
</dbReference>
<dbReference type="InterPro" id="IPR011006">
    <property type="entry name" value="CheY-like_superfamily"/>
</dbReference>
<dbReference type="InterPro" id="IPR036457">
    <property type="entry name" value="PPM-type-like_dom_sf"/>
</dbReference>
<dbReference type="InterPro" id="IPR028616">
    <property type="entry name" value="RssB"/>
</dbReference>
<dbReference type="InterPro" id="IPR001789">
    <property type="entry name" value="Sig_transdc_resp-reg_receiver"/>
</dbReference>
<dbReference type="NCBIfam" id="NF007969">
    <property type="entry name" value="PRK10693.1"/>
    <property type="match status" value="1"/>
</dbReference>
<dbReference type="PANTHER" id="PTHR44591:SF23">
    <property type="entry name" value="CHEY SUBFAMILY"/>
    <property type="match status" value="1"/>
</dbReference>
<dbReference type="PANTHER" id="PTHR44591">
    <property type="entry name" value="STRESS RESPONSE REGULATOR PROTEIN 1"/>
    <property type="match status" value="1"/>
</dbReference>
<dbReference type="Pfam" id="PF00072">
    <property type="entry name" value="Response_reg"/>
    <property type="match status" value="1"/>
</dbReference>
<dbReference type="SMART" id="SM00448">
    <property type="entry name" value="REC"/>
    <property type="match status" value="1"/>
</dbReference>
<dbReference type="SUPFAM" id="SSF52172">
    <property type="entry name" value="CheY-like"/>
    <property type="match status" value="1"/>
</dbReference>
<dbReference type="PROSITE" id="PS50110">
    <property type="entry name" value="RESPONSE_REGULATORY"/>
    <property type="match status" value="1"/>
</dbReference>
<comment type="function">
    <text evidence="1 4 6 9 10 12 13">Regulates the turnover of the sigma S factor (RpoS) by promoting its proteolysis in exponentially growing cells. Acts by binding and delivering RpoS to the ClpXP protease. RssB is not co-degraded with RpoS, but is released from the complex and can initiate a new cycle of RpoS recognition and degradation. In stationary phase, could also act as an anti-sigma factor and reduce the ability of RpoS to activate gene expression. Is also involved in the regulation of the mRNA polyadenylation pathway during stationary phase, probably by maintaining the association of PcnB with the degradosome.</text>
</comment>
<comment type="activity regulation">
    <text evidence="7 8 11">Under certain stress conditions, activity is inhibited by the anti-adapter proteins IraP, IraD and IraM. IraP is involved in response to phosphate stavation, IraD in response to DNA damage and IraM in response to magnesium starvation. IraD and IraM interact with inactive RssB, blocking its ability to interact with RpoS. IraP may mimic RpoS in its interaction with RssB and directly competing with RpoS for binding to RssB.</text>
</comment>
<comment type="subunit">
    <text evidence="1 3 4 6 7 8 11">Binds to RpoS with a stoichiometry of 1:1. Interacts with the anti-adapter proteins IraP, IraD and IraM.</text>
</comment>
<comment type="interaction">
    <interactant intactId="EBI-1122979">
        <id>P0AEV1</id>
    </interactant>
    <interactant intactId="EBI-6479779">
        <id>P39375</id>
        <label>iraD</label>
    </interactant>
    <organismsDiffer>false</organismsDiffer>
    <experiments>4</experiments>
</comment>
<comment type="interaction">
    <interactant intactId="EBI-1122979">
        <id>P0AEV1</id>
    </interactant>
    <interactant intactId="EBI-6479798">
        <id>P75987</id>
        <label>iraM</label>
    </interactant>
    <organismsDiffer>false</organismsDiffer>
    <experiments>2</experiments>
</comment>
<comment type="interaction">
    <interactant intactId="EBI-1122979">
        <id>P0AEV1</id>
    </interactant>
    <interactant intactId="EBI-1116300">
        <id>P0AAN9</id>
        <label>iraP</label>
    </interactant>
    <organismsDiffer>false</organismsDiffer>
    <experiments>3</experiments>
</comment>
<comment type="induction">
    <text evidence="5">Expression is induced during stationary phase by RpoS.</text>
</comment>
<comment type="domain">
    <text evidence="6 11">Contains an N-terminal receiver domain and a C-terminal output domain that are both required for binding to RpoS. IraP and IraD interact with the N-terminal domain. IraM interacts with the C-terminal domain and, more weakly, the N-terminal domain.</text>
</comment>
<comment type="PTM">
    <text evidence="1 3 6 11 14">Phosphorylated. Phosphorylation stimulates the interaction with RpoS and, therefore, the proteolysis of RpoS.</text>
</comment>
<comment type="disruption phenotype">
    <text evidence="9 12">Mutants exhibit nearly constitutively high levels of RpoS and are impaired in the post-transcriptional growth phase-related and osmotic regulation of RpoS. In exponentially growing cells, mutants exhibit significantly reduced levels of polyadenylation and increased stability of specific mRNAs.</text>
</comment>
<comment type="similarity">
    <text evidence="1">Belongs to the RssB family.</text>
</comment>